<comment type="function">
    <text evidence="1">Required for accurate and efficient protein synthesis under certain stress conditions. May act as a fidelity factor of the translation reaction, by catalyzing a one-codon backward translocation of tRNAs on improperly translocated ribosomes. Back-translocation proceeds from a post-translocation (POST) complex to a pre-translocation (PRE) complex, thus giving elongation factor G a second chance to translocate the tRNAs correctly. Binds to ribosomes in a GTP-dependent manner.</text>
</comment>
<comment type="catalytic activity">
    <reaction evidence="1">
        <text>GTP + H2O = GDP + phosphate + H(+)</text>
        <dbReference type="Rhea" id="RHEA:19669"/>
        <dbReference type="ChEBI" id="CHEBI:15377"/>
        <dbReference type="ChEBI" id="CHEBI:15378"/>
        <dbReference type="ChEBI" id="CHEBI:37565"/>
        <dbReference type="ChEBI" id="CHEBI:43474"/>
        <dbReference type="ChEBI" id="CHEBI:58189"/>
        <dbReference type="EC" id="3.6.5.n1"/>
    </reaction>
</comment>
<comment type="subcellular location">
    <subcellularLocation>
        <location evidence="1">Cell inner membrane</location>
        <topology evidence="1">Peripheral membrane protein</topology>
        <orientation evidence="1">Cytoplasmic side</orientation>
    </subcellularLocation>
</comment>
<comment type="similarity">
    <text evidence="1">Belongs to the TRAFAC class translation factor GTPase superfamily. Classic translation factor GTPase family. LepA subfamily.</text>
</comment>
<organism>
    <name type="scientific">Shewanella frigidimarina (strain NCIMB 400)</name>
    <dbReference type="NCBI Taxonomy" id="318167"/>
    <lineage>
        <taxon>Bacteria</taxon>
        <taxon>Pseudomonadati</taxon>
        <taxon>Pseudomonadota</taxon>
        <taxon>Gammaproteobacteria</taxon>
        <taxon>Alteromonadales</taxon>
        <taxon>Shewanellaceae</taxon>
        <taxon>Shewanella</taxon>
    </lineage>
</organism>
<dbReference type="EC" id="3.6.5.n1" evidence="1"/>
<dbReference type="EMBL" id="CP000447">
    <property type="protein sequence ID" value="ABI72770.1"/>
    <property type="molecule type" value="Genomic_DNA"/>
</dbReference>
<dbReference type="RefSeq" id="WP_011638379.1">
    <property type="nucleotide sequence ID" value="NC_008345.1"/>
</dbReference>
<dbReference type="SMR" id="Q07YZ4"/>
<dbReference type="STRING" id="318167.Sfri_2931"/>
<dbReference type="KEGG" id="sfr:Sfri_2931"/>
<dbReference type="eggNOG" id="COG0481">
    <property type="taxonomic scope" value="Bacteria"/>
</dbReference>
<dbReference type="HOGENOM" id="CLU_009995_3_3_6"/>
<dbReference type="OrthoDB" id="9804431at2"/>
<dbReference type="Proteomes" id="UP000000684">
    <property type="component" value="Chromosome"/>
</dbReference>
<dbReference type="GO" id="GO:0005886">
    <property type="term" value="C:plasma membrane"/>
    <property type="evidence" value="ECO:0007669"/>
    <property type="project" value="UniProtKB-SubCell"/>
</dbReference>
<dbReference type="GO" id="GO:0005525">
    <property type="term" value="F:GTP binding"/>
    <property type="evidence" value="ECO:0007669"/>
    <property type="project" value="UniProtKB-UniRule"/>
</dbReference>
<dbReference type="GO" id="GO:0003924">
    <property type="term" value="F:GTPase activity"/>
    <property type="evidence" value="ECO:0007669"/>
    <property type="project" value="UniProtKB-UniRule"/>
</dbReference>
<dbReference type="GO" id="GO:0097216">
    <property type="term" value="F:guanosine tetraphosphate binding"/>
    <property type="evidence" value="ECO:0007669"/>
    <property type="project" value="UniProtKB-ARBA"/>
</dbReference>
<dbReference type="GO" id="GO:0043022">
    <property type="term" value="F:ribosome binding"/>
    <property type="evidence" value="ECO:0007669"/>
    <property type="project" value="UniProtKB-UniRule"/>
</dbReference>
<dbReference type="GO" id="GO:0003746">
    <property type="term" value="F:translation elongation factor activity"/>
    <property type="evidence" value="ECO:0007669"/>
    <property type="project" value="UniProtKB-UniRule"/>
</dbReference>
<dbReference type="GO" id="GO:0045727">
    <property type="term" value="P:positive regulation of translation"/>
    <property type="evidence" value="ECO:0007669"/>
    <property type="project" value="UniProtKB-UniRule"/>
</dbReference>
<dbReference type="CDD" id="cd03699">
    <property type="entry name" value="EF4_II"/>
    <property type="match status" value="1"/>
</dbReference>
<dbReference type="CDD" id="cd16260">
    <property type="entry name" value="EF4_III"/>
    <property type="match status" value="1"/>
</dbReference>
<dbReference type="CDD" id="cd01890">
    <property type="entry name" value="LepA"/>
    <property type="match status" value="1"/>
</dbReference>
<dbReference type="CDD" id="cd03709">
    <property type="entry name" value="lepA_C"/>
    <property type="match status" value="1"/>
</dbReference>
<dbReference type="FunFam" id="3.40.50.300:FF:000078">
    <property type="entry name" value="Elongation factor 4"/>
    <property type="match status" value="1"/>
</dbReference>
<dbReference type="FunFam" id="2.40.30.10:FF:000015">
    <property type="entry name" value="Translation factor GUF1, mitochondrial"/>
    <property type="match status" value="1"/>
</dbReference>
<dbReference type="FunFam" id="3.30.70.240:FF:000007">
    <property type="entry name" value="Translation factor GUF1, mitochondrial"/>
    <property type="match status" value="1"/>
</dbReference>
<dbReference type="FunFam" id="3.30.70.2570:FF:000001">
    <property type="entry name" value="Translation factor GUF1, mitochondrial"/>
    <property type="match status" value="1"/>
</dbReference>
<dbReference type="FunFam" id="3.30.70.870:FF:000004">
    <property type="entry name" value="Translation factor GUF1, mitochondrial"/>
    <property type="match status" value="1"/>
</dbReference>
<dbReference type="Gene3D" id="3.30.70.240">
    <property type="match status" value="1"/>
</dbReference>
<dbReference type="Gene3D" id="3.30.70.2570">
    <property type="entry name" value="Elongation factor 4, C-terminal domain"/>
    <property type="match status" value="1"/>
</dbReference>
<dbReference type="Gene3D" id="3.30.70.870">
    <property type="entry name" value="Elongation Factor G (Translational Gtpase), domain 3"/>
    <property type="match status" value="1"/>
</dbReference>
<dbReference type="Gene3D" id="3.40.50.300">
    <property type="entry name" value="P-loop containing nucleotide triphosphate hydrolases"/>
    <property type="match status" value="1"/>
</dbReference>
<dbReference type="Gene3D" id="2.40.30.10">
    <property type="entry name" value="Translation factors"/>
    <property type="match status" value="1"/>
</dbReference>
<dbReference type="HAMAP" id="MF_00071">
    <property type="entry name" value="LepA"/>
    <property type="match status" value="1"/>
</dbReference>
<dbReference type="InterPro" id="IPR006297">
    <property type="entry name" value="EF-4"/>
</dbReference>
<dbReference type="InterPro" id="IPR035647">
    <property type="entry name" value="EFG_III/V"/>
</dbReference>
<dbReference type="InterPro" id="IPR000640">
    <property type="entry name" value="EFG_V-like"/>
</dbReference>
<dbReference type="InterPro" id="IPR004161">
    <property type="entry name" value="EFTu-like_2"/>
</dbReference>
<dbReference type="InterPro" id="IPR031157">
    <property type="entry name" value="G_TR_CS"/>
</dbReference>
<dbReference type="InterPro" id="IPR038363">
    <property type="entry name" value="LepA_C_sf"/>
</dbReference>
<dbReference type="InterPro" id="IPR013842">
    <property type="entry name" value="LepA_CTD"/>
</dbReference>
<dbReference type="InterPro" id="IPR035654">
    <property type="entry name" value="LepA_IV"/>
</dbReference>
<dbReference type="InterPro" id="IPR027417">
    <property type="entry name" value="P-loop_NTPase"/>
</dbReference>
<dbReference type="InterPro" id="IPR005225">
    <property type="entry name" value="Small_GTP-bd"/>
</dbReference>
<dbReference type="InterPro" id="IPR000795">
    <property type="entry name" value="T_Tr_GTP-bd_dom"/>
</dbReference>
<dbReference type="NCBIfam" id="TIGR01393">
    <property type="entry name" value="lepA"/>
    <property type="match status" value="1"/>
</dbReference>
<dbReference type="NCBIfam" id="TIGR00231">
    <property type="entry name" value="small_GTP"/>
    <property type="match status" value="1"/>
</dbReference>
<dbReference type="PANTHER" id="PTHR43512:SF4">
    <property type="entry name" value="TRANSLATION FACTOR GUF1 HOMOLOG, CHLOROPLASTIC"/>
    <property type="match status" value="1"/>
</dbReference>
<dbReference type="PANTHER" id="PTHR43512">
    <property type="entry name" value="TRANSLATION FACTOR GUF1-RELATED"/>
    <property type="match status" value="1"/>
</dbReference>
<dbReference type="Pfam" id="PF00679">
    <property type="entry name" value="EFG_C"/>
    <property type="match status" value="1"/>
</dbReference>
<dbReference type="Pfam" id="PF00009">
    <property type="entry name" value="GTP_EFTU"/>
    <property type="match status" value="1"/>
</dbReference>
<dbReference type="Pfam" id="PF03144">
    <property type="entry name" value="GTP_EFTU_D2"/>
    <property type="match status" value="1"/>
</dbReference>
<dbReference type="Pfam" id="PF06421">
    <property type="entry name" value="LepA_C"/>
    <property type="match status" value="1"/>
</dbReference>
<dbReference type="PRINTS" id="PR00315">
    <property type="entry name" value="ELONGATNFCT"/>
</dbReference>
<dbReference type="SMART" id="SM00838">
    <property type="entry name" value="EFG_C"/>
    <property type="match status" value="1"/>
</dbReference>
<dbReference type="SUPFAM" id="SSF54980">
    <property type="entry name" value="EF-G C-terminal domain-like"/>
    <property type="match status" value="2"/>
</dbReference>
<dbReference type="SUPFAM" id="SSF52540">
    <property type="entry name" value="P-loop containing nucleoside triphosphate hydrolases"/>
    <property type="match status" value="1"/>
</dbReference>
<dbReference type="PROSITE" id="PS00301">
    <property type="entry name" value="G_TR_1"/>
    <property type="match status" value="1"/>
</dbReference>
<dbReference type="PROSITE" id="PS51722">
    <property type="entry name" value="G_TR_2"/>
    <property type="match status" value="1"/>
</dbReference>
<accession>Q07YZ4</accession>
<reference key="1">
    <citation type="submission" date="2006-08" db="EMBL/GenBank/DDBJ databases">
        <title>Complete sequence of Shewanella frigidimarina NCIMB 400.</title>
        <authorList>
            <consortium name="US DOE Joint Genome Institute"/>
            <person name="Copeland A."/>
            <person name="Lucas S."/>
            <person name="Lapidus A."/>
            <person name="Barry K."/>
            <person name="Detter J.C."/>
            <person name="Glavina del Rio T."/>
            <person name="Hammon N."/>
            <person name="Israni S."/>
            <person name="Dalin E."/>
            <person name="Tice H."/>
            <person name="Pitluck S."/>
            <person name="Fredrickson J.K."/>
            <person name="Kolker E."/>
            <person name="McCuel L.A."/>
            <person name="DiChristina T."/>
            <person name="Nealson K.H."/>
            <person name="Newman D."/>
            <person name="Tiedje J.M."/>
            <person name="Zhou J."/>
            <person name="Romine M.F."/>
            <person name="Culley D.E."/>
            <person name="Serres M."/>
            <person name="Chertkov O."/>
            <person name="Brettin T."/>
            <person name="Bruce D."/>
            <person name="Han C."/>
            <person name="Tapia R."/>
            <person name="Gilna P."/>
            <person name="Schmutz J."/>
            <person name="Larimer F."/>
            <person name="Land M."/>
            <person name="Hauser L."/>
            <person name="Kyrpides N."/>
            <person name="Mikhailova N."/>
            <person name="Richardson P."/>
        </authorList>
    </citation>
    <scope>NUCLEOTIDE SEQUENCE [LARGE SCALE GENOMIC DNA]</scope>
    <source>
        <strain>NCIMB 400</strain>
    </source>
</reference>
<keyword id="KW-0997">Cell inner membrane</keyword>
<keyword id="KW-1003">Cell membrane</keyword>
<keyword id="KW-0342">GTP-binding</keyword>
<keyword id="KW-0378">Hydrolase</keyword>
<keyword id="KW-0472">Membrane</keyword>
<keyword id="KW-0547">Nucleotide-binding</keyword>
<keyword id="KW-0648">Protein biosynthesis</keyword>
<keyword id="KW-1185">Reference proteome</keyword>
<proteinExistence type="inferred from homology"/>
<sequence length="596" mass="65929">MKHIRNFSIIAHIDHGKSTLSDRLIQVCGGLTDREMAAQVLDSMDLERERGITIKAQSVTLDYHAKDGNTYLLNFIDTPGHVDFSYEVSRSLAACEGALLVVDAGQGVEAQTLANCYTALEMNLDVVPVLNKIDLPQAEPDRVAAEIEDIVGIDAMDAVRCSAKTGVGVDLVLEEIIAKIPPPVGDESAPLQALIIDSWFDAYLGVVSLVRIKNGILKKGEKFKVMSTGQNYNADRVGIFTPKEKDKTELRAGEVGYVISGIKEIHGAPVGDTLTHAKHGADKPLPGFKRVKPQVYAGVFPISTDEYESFRDALNKLSLNDASLFFEPETSSALGFGFRIGYLGLLHMEIVQERLEREYNLDLITTAPTVVYEVIMNNGETIYVDNPSGLPALNNIEEIREPIVEANILVPKEYLGNVITLCIEKRGSQTNMVYHGNQVAVTYHLPMAEVVMDFFDRLKSTSRGYASLEYNFIRFDPADMVRLDILINGDRVDALAMIIHRSNIRHRGLALVEKMKELIPRQMFDIAIQAAVGSQIIARSSIKALRKDVTAKCYGGDVSRKKKLLNKQKEGKKRMKQVGNVEVPQEAFLAVLKLND</sequence>
<name>LEPA_SHEFN</name>
<protein>
    <recommendedName>
        <fullName evidence="1">Elongation factor 4</fullName>
        <shortName evidence="1">EF-4</shortName>
        <ecNumber evidence="1">3.6.5.n1</ecNumber>
    </recommendedName>
    <alternativeName>
        <fullName evidence="1">Ribosomal back-translocase LepA</fullName>
    </alternativeName>
</protein>
<gene>
    <name evidence="1" type="primary">lepA</name>
    <name type="ordered locus">Sfri_2931</name>
</gene>
<feature type="chain" id="PRO_0000265701" description="Elongation factor 4">
    <location>
        <begin position="1"/>
        <end position="596"/>
    </location>
</feature>
<feature type="domain" description="tr-type G">
    <location>
        <begin position="2"/>
        <end position="184"/>
    </location>
</feature>
<feature type="binding site" evidence="1">
    <location>
        <begin position="14"/>
        <end position="19"/>
    </location>
    <ligand>
        <name>GTP</name>
        <dbReference type="ChEBI" id="CHEBI:37565"/>
    </ligand>
</feature>
<feature type="binding site" evidence="1">
    <location>
        <begin position="131"/>
        <end position="134"/>
    </location>
    <ligand>
        <name>GTP</name>
        <dbReference type="ChEBI" id="CHEBI:37565"/>
    </ligand>
</feature>
<evidence type="ECO:0000255" key="1">
    <source>
        <dbReference type="HAMAP-Rule" id="MF_00071"/>
    </source>
</evidence>